<comment type="function">
    <text evidence="1">An accessory protein needed during the final step in the assembly of 30S ribosomal subunit, possibly for assembly of the head region. Essential for efficient processing of 16S rRNA. May be needed both before and after RbfA during the maturation of 16S rRNA. It has affinity for free ribosomal 30S subunits but not for 70S ribosomes.</text>
</comment>
<comment type="subunit">
    <text evidence="1">Binds ribosomal protein uS19.</text>
</comment>
<comment type="subcellular location">
    <subcellularLocation>
        <location evidence="1">Cytoplasm</location>
    </subcellularLocation>
</comment>
<comment type="domain">
    <text evidence="1">The PRC barrel domain binds ribosomal protein uS19.</text>
</comment>
<comment type="similarity">
    <text evidence="1">Belongs to the RimM family.</text>
</comment>
<gene>
    <name evidence="1" type="primary">rimM</name>
    <name type="ordered locus">PsycPRwf_0201</name>
</gene>
<protein>
    <recommendedName>
        <fullName evidence="1">Ribosome maturation factor RimM</fullName>
    </recommendedName>
</protein>
<accession>A5WBW9</accession>
<reference key="1">
    <citation type="submission" date="2007-05" db="EMBL/GenBank/DDBJ databases">
        <title>Complete sequence of chromosome of Psychrobacter sp. PRwf-1.</title>
        <authorList>
            <consortium name="US DOE Joint Genome Institute"/>
            <person name="Copeland A."/>
            <person name="Lucas S."/>
            <person name="Lapidus A."/>
            <person name="Barry K."/>
            <person name="Detter J.C."/>
            <person name="Glavina del Rio T."/>
            <person name="Hammon N."/>
            <person name="Israni S."/>
            <person name="Dalin E."/>
            <person name="Tice H."/>
            <person name="Pitluck S."/>
            <person name="Chain P."/>
            <person name="Malfatti S."/>
            <person name="Shin M."/>
            <person name="Vergez L."/>
            <person name="Schmutz J."/>
            <person name="Larimer F."/>
            <person name="Land M."/>
            <person name="Hauser L."/>
            <person name="Kyrpides N."/>
            <person name="Kim E."/>
            <person name="Tiedje J."/>
            <person name="Richardson P."/>
        </authorList>
    </citation>
    <scope>NUCLEOTIDE SEQUENCE [LARGE SCALE GENOMIC DNA]</scope>
    <source>
        <strain>PRwf-1</strain>
    </source>
</reference>
<organism>
    <name type="scientific">Psychrobacter sp. (strain PRwf-1)</name>
    <dbReference type="NCBI Taxonomy" id="349106"/>
    <lineage>
        <taxon>Bacteria</taxon>
        <taxon>Pseudomonadati</taxon>
        <taxon>Pseudomonadota</taxon>
        <taxon>Gammaproteobacteria</taxon>
        <taxon>Moraxellales</taxon>
        <taxon>Moraxellaceae</taxon>
        <taxon>Psychrobacter</taxon>
    </lineage>
</organism>
<sequence length="176" mass="20245">MTKPNADSLMKIGQLKKPYGIKGWLWVFSETEEREAIFSYSPWWMKTATGFKPLTVTQWRRQGTGIVAQFEQVPDRNVAETMNGVSIWIDKDSLPSTEEDEYYWSDLVGLSVINKQDECLGTVKELFETGAHPIMKVVPSQDSIDDEPRMIPWHKQTVDVVDLAAGRMVVDWERDF</sequence>
<evidence type="ECO:0000255" key="1">
    <source>
        <dbReference type="HAMAP-Rule" id="MF_00014"/>
    </source>
</evidence>
<keyword id="KW-0143">Chaperone</keyword>
<keyword id="KW-0963">Cytoplasm</keyword>
<keyword id="KW-0690">Ribosome biogenesis</keyword>
<keyword id="KW-0698">rRNA processing</keyword>
<dbReference type="EMBL" id="CP000713">
    <property type="protein sequence ID" value="ABQ93160.1"/>
    <property type="molecule type" value="Genomic_DNA"/>
</dbReference>
<dbReference type="SMR" id="A5WBW9"/>
<dbReference type="STRING" id="349106.PsycPRwf_0201"/>
<dbReference type="KEGG" id="prw:PsycPRwf_0201"/>
<dbReference type="eggNOG" id="COG0806">
    <property type="taxonomic scope" value="Bacteria"/>
</dbReference>
<dbReference type="HOGENOM" id="CLU_077636_1_0_6"/>
<dbReference type="GO" id="GO:0005737">
    <property type="term" value="C:cytoplasm"/>
    <property type="evidence" value="ECO:0007669"/>
    <property type="project" value="UniProtKB-SubCell"/>
</dbReference>
<dbReference type="GO" id="GO:0005840">
    <property type="term" value="C:ribosome"/>
    <property type="evidence" value="ECO:0007669"/>
    <property type="project" value="InterPro"/>
</dbReference>
<dbReference type="GO" id="GO:0043022">
    <property type="term" value="F:ribosome binding"/>
    <property type="evidence" value="ECO:0007669"/>
    <property type="project" value="InterPro"/>
</dbReference>
<dbReference type="GO" id="GO:0042274">
    <property type="term" value="P:ribosomal small subunit biogenesis"/>
    <property type="evidence" value="ECO:0007669"/>
    <property type="project" value="UniProtKB-UniRule"/>
</dbReference>
<dbReference type="GO" id="GO:0006364">
    <property type="term" value="P:rRNA processing"/>
    <property type="evidence" value="ECO:0007669"/>
    <property type="project" value="UniProtKB-UniRule"/>
</dbReference>
<dbReference type="Gene3D" id="2.30.30.240">
    <property type="entry name" value="PRC-barrel domain"/>
    <property type="match status" value="1"/>
</dbReference>
<dbReference type="Gene3D" id="2.40.30.60">
    <property type="entry name" value="RimM"/>
    <property type="match status" value="1"/>
</dbReference>
<dbReference type="HAMAP" id="MF_00014">
    <property type="entry name" value="Ribosome_mat_RimM"/>
    <property type="match status" value="1"/>
</dbReference>
<dbReference type="InterPro" id="IPR011033">
    <property type="entry name" value="PRC_barrel-like_sf"/>
</dbReference>
<dbReference type="InterPro" id="IPR056792">
    <property type="entry name" value="PRC_RimM"/>
</dbReference>
<dbReference type="InterPro" id="IPR011961">
    <property type="entry name" value="RimM"/>
</dbReference>
<dbReference type="InterPro" id="IPR002676">
    <property type="entry name" value="RimM_N"/>
</dbReference>
<dbReference type="InterPro" id="IPR036976">
    <property type="entry name" value="RimM_N_sf"/>
</dbReference>
<dbReference type="InterPro" id="IPR009000">
    <property type="entry name" value="Transl_B-barrel_sf"/>
</dbReference>
<dbReference type="NCBIfam" id="TIGR02273">
    <property type="entry name" value="16S_RimM"/>
    <property type="match status" value="1"/>
</dbReference>
<dbReference type="PANTHER" id="PTHR33692">
    <property type="entry name" value="RIBOSOME MATURATION FACTOR RIMM"/>
    <property type="match status" value="1"/>
</dbReference>
<dbReference type="PANTHER" id="PTHR33692:SF1">
    <property type="entry name" value="RIBOSOME MATURATION FACTOR RIMM"/>
    <property type="match status" value="1"/>
</dbReference>
<dbReference type="Pfam" id="PF24986">
    <property type="entry name" value="PRC_RimM"/>
    <property type="match status" value="1"/>
</dbReference>
<dbReference type="Pfam" id="PF01782">
    <property type="entry name" value="RimM"/>
    <property type="match status" value="1"/>
</dbReference>
<dbReference type="SUPFAM" id="SSF50346">
    <property type="entry name" value="PRC-barrel domain"/>
    <property type="match status" value="1"/>
</dbReference>
<dbReference type="SUPFAM" id="SSF50447">
    <property type="entry name" value="Translation proteins"/>
    <property type="match status" value="1"/>
</dbReference>
<name>RIMM_PSYWF</name>
<feature type="chain" id="PRO_0000321747" description="Ribosome maturation factor RimM">
    <location>
        <begin position="1"/>
        <end position="176"/>
    </location>
</feature>
<feature type="domain" description="PRC barrel" evidence="1">
    <location>
        <begin position="99"/>
        <end position="176"/>
    </location>
</feature>
<proteinExistence type="inferred from homology"/>